<keyword id="KW-0066">ATP synthesis</keyword>
<keyword id="KW-1003">Cell membrane</keyword>
<keyword id="KW-0138">CF(0)</keyword>
<keyword id="KW-0375">Hydrogen ion transport</keyword>
<keyword id="KW-0406">Ion transport</keyword>
<keyword id="KW-0472">Membrane</keyword>
<keyword id="KW-0812">Transmembrane</keyword>
<keyword id="KW-1133">Transmembrane helix</keyword>
<keyword id="KW-0813">Transport</keyword>
<gene>
    <name evidence="1" type="primary">atpF</name>
    <name type="ordered locus">Mmcs_3880</name>
</gene>
<protein>
    <recommendedName>
        <fullName evidence="1">ATP synthase subunit b</fullName>
    </recommendedName>
    <alternativeName>
        <fullName evidence="1">ATP synthase F(0) sector subunit b</fullName>
    </alternativeName>
    <alternativeName>
        <fullName evidence="1">ATPase subunit I</fullName>
    </alternativeName>
    <alternativeName>
        <fullName evidence="1">F-type ATPase subunit b</fullName>
        <shortName evidence="1">F-ATPase subunit b</shortName>
    </alternativeName>
</protein>
<reference key="1">
    <citation type="submission" date="2006-06" db="EMBL/GenBank/DDBJ databases">
        <title>Complete sequence of chromosome of Mycobacterium sp. MCS.</title>
        <authorList>
            <consortium name="US DOE Joint Genome Institute"/>
            <person name="Copeland A."/>
            <person name="Lucas S."/>
            <person name="Lapidus A."/>
            <person name="Barry K."/>
            <person name="Detter J.C."/>
            <person name="Glavina del Rio T."/>
            <person name="Hammon N."/>
            <person name="Israni S."/>
            <person name="Dalin E."/>
            <person name="Tice H."/>
            <person name="Pitluck S."/>
            <person name="Martinez M."/>
            <person name="Schmutz J."/>
            <person name="Larimer F."/>
            <person name="Land M."/>
            <person name="Hauser L."/>
            <person name="Kyrpides N."/>
            <person name="Kim E."/>
            <person name="Miller C.D."/>
            <person name="Hughes J.E."/>
            <person name="Anderson A.J."/>
            <person name="Sims R.C."/>
            <person name="Richardson P."/>
        </authorList>
    </citation>
    <scope>NUCLEOTIDE SEQUENCE [LARGE SCALE GENOMIC DNA]</scope>
    <source>
        <strain>MCS</strain>
    </source>
</reference>
<sequence length="169" mass="17967">MGDLSTTILAAEEGGGGNFLVPNGTFFFVLLIFLIVLGVIAKWVVPPISKVLQEREAMVTKTVEDNRKAADLFAAAQGDSQQVMAKARREASGIRDEARGEGRKILEDMRSRASAESAATLQKTNEELSRQGQQTAAELQSSIETLSATLASRVLGVDISSAAATSQGR</sequence>
<name>ATPF_MYCSS</name>
<evidence type="ECO:0000255" key="1">
    <source>
        <dbReference type="HAMAP-Rule" id="MF_01398"/>
    </source>
</evidence>
<accession>Q1B549</accession>
<comment type="function">
    <text evidence="1">F(1)F(0) ATP synthase produces ATP from ADP in the presence of a proton or sodium gradient. F-type ATPases consist of two structural domains, F(1) containing the extramembraneous catalytic core and F(0) containing the membrane proton channel, linked together by a central stalk and a peripheral stalk. During catalysis, ATP synthesis in the catalytic domain of F(1) is coupled via a rotary mechanism of the central stalk subunits to proton translocation.</text>
</comment>
<comment type="function">
    <text evidence="1">Component of the F(0) channel, it forms part of the peripheral stalk, linking F(1) to F(0).</text>
</comment>
<comment type="subunit">
    <text evidence="1">F-type ATPases have 2 components, F(1) - the catalytic core - and F(0) - the membrane proton channel. F(1) has five subunits: alpha(3), beta(3), gamma(1), delta(1), epsilon(1). F(0) has three main subunits: a(1), b(2) and c(10-14). The alpha and beta chains form an alternating ring which encloses part of the gamma chain. F(1) is attached to F(0) by a central stalk formed by the gamma and epsilon chains, while a peripheral stalk is formed by the delta and b chains.</text>
</comment>
<comment type="subcellular location">
    <subcellularLocation>
        <location evidence="1">Cell membrane</location>
        <topology evidence="1">Single-pass membrane protein</topology>
    </subcellularLocation>
</comment>
<comment type="similarity">
    <text evidence="1">Belongs to the ATPase B chain family.</text>
</comment>
<proteinExistence type="inferred from homology"/>
<feature type="chain" id="PRO_0000368602" description="ATP synthase subunit b">
    <location>
        <begin position="1"/>
        <end position="169"/>
    </location>
</feature>
<feature type="transmembrane region" description="Helical" evidence="1">
    <location>
        <begin position="26"/>
        <end position="46"/>
    </location>
</feature>
<organism>
    <name type="scientific">Mycobacterium sp. (strain MCS)</name>
    <dbReference type="NCBI Taxonomy" id="164756"/>
    <lineage>
        <taxon>Bacteria</taxon>
        <taxon>Bacillati</taxon>
        <taxon>Actinomycetota</taxon>
        <taxon>Actinomycetes</taxon>
        <taxon>Mycobacteriales</taxon>
        <taxon>Mycobacteriaceae</taxon>
        <taxon>Mycobacterium</taxon>
    </lineage>
</organism>
<dbReference type="EMBL" id="CP000384">
    <property type="protein sequence ID" value="ABG09985.1"/>
    <property type="molecule type" value="Genomic_DNA"/>
</dbReference>
<dbReference type="SMR" id="Q1B549"/>
<dbReference type="KEGG" id="mmc:Mmcs_3880"/>
<dbReference type="HOGENOM" id="CLU_079215_5_2_11"/>
<dbReference type="BioCyc" id="MSP164756:G1G6O-3964-MONOMER"/>
<dbReference type="GO" id="GO:0005886">
    <property type="term" value="C:plasma membrane"/>
    <property type="evidence" value="ECO:0007669"/>
    <property type="project" value="UniProtKB-SubCell"/>
</dbReference>
<dbReference type="GO" id="GO:0045259">
    <property type="term" value="C:proton-transporting ATP synthase complex"/>
    <property type="evidence" value="ECO:0007669"/>
    <property type="project" value="UniProtKB-KW"/>
</dbReference>
<dbReference type="GO" id="GO:0046933">
    <property type="term" value="F:proton-transporting ATP synthase activity, rotational mechanism"/>
    <property type="evidence" value="ECO:0007669"/>
    <property type="project" value="UniProtKB-UniRule"/>
</dbReference>
<dbReference type="GO" id="GO:0046961">
    <property type="term" value="F:proton-transporting ATPase activity, rotational mechanism"/>
    <property type="evidence" value="ECO:0007669"/>
    <property type="project" value="TreeGrafter"/>
</dbReference>
<dbReference type="CDD" id="cd06503">
    <property type="entry name" value="ATP-synt_Fo_b"/>
    <property type="match status" value="1"/>
</dbReference>
<dbReference type="HAMAP" id="MF_01398">
    <property type="entry name" value="ATP_synth_b_bprime"/>
    <property type="match status" value="1"/>
</dbReference>
<dbReference type="InterPro" id="IPR028987">
    <property type="entry name" value="ATP_synth_B-like_membr_sf"/>
</dbReference>
<dbReference type="InterPro" id="IPR002146">
    <property type="entry name" value="ATP_synth_b/b'su_bac/chlpt"/>
</dbReference>
<dbReference type="InterPro" id="IPR005864">
    <property type="entry name" value="ATP_synth_F0_bsu_bac"/>
</dbReference>
<dbReference type="InterPro" id="IPR050059">
    <property type="entry name" value="ATP_synthase_B_chain"/>
</dbReference>
<dbReference type="NCBIfam" id="TIGR01144">
    <property type="entry name" value="ATP_synt_b"/>
    <property type="match status" value="1"/>
</dbReference>
<dbReference type="NCBIfam" id="NF004412">
    <property type="entry name" value="PRK05759.1-3"/>
    <property type="match status" value="1"/>
</dbReference>
<dbReference type="PANTHER" id="PTHR33445:SF1">
    <property type="entry name" value="ATP SYNTHASE SUBUNIT B"/>
    <property type="match status" value="1"/>
</dbReference>
<dbReference type="PANTHER" id="PTHR33445">
    <property type="entry name" value="ATP SYNTHASE SUBUNIT B', CHLOROPLASTIC"/>
    <property type="match status" value="1"/>
</dbReference>
<dbReference type="Pfam" id="PF00430">
    <property type="entry name" value="ATP-synt_B"/>
    <property type="match status" value="1"/>
</dbReference>
<dbReference type="SUPFAM" id="SSF81573">
    <property type="entry name" value="F1F0 ATP synthase subunit B, membrane domain"/>
    <property type="match status" value="1"/>
</dbReference>